<dbReference type="EC" id="5.4.99.25" evidence="1"/>
<dbReference type="EMBL" id="CP000114">
    <property type="protein sequence ID" value="ABA46194.1"/>
    <property type="molecule type" value="Genomic_DNA"/>
</dbReference>
<dbReference type="RefSeq" id="WP_001873502.1">
    <property type="nucleotide sequence ID" value="NC_007432.1"/>
</dbReference>
<dbReference type="SMR" id="Q3K189"/>
<dbReference type="GeneID" id="66885938"/>
<dbReference type="KEGG" id="sak:SAK_1093"/>
<dbReference type="HOGENOM" id="CLU_032087_0_1_9"/>
<dbReference type="GO" id="GO:0003723">
    <property type="term" value="F:RNA binding"/>
    <property type="evidence" value="ECO:0007669"/>
    <property type="project" value="InterPro"/>
</dbReference>
<dbReference type="GO" id="GO:0160148">
    <property type="term" value="F:tRNA pseudouridine(55) synthase activity"/>
    <property type="evidence" value="ECO:0007669"/>
    <property type="project" value="UniProtKB-EC"/>
</dbReference>
<dbReference type="GO" id="GO:1990481">
    <property type="term" value="P:mRNA pseudouridine synthesis"/>
    <property type="evidence" value="ECO:0007669"/>
    <property type="project" value="TreeGrafter"/>
</dbReference>
<dbReference type="GO" id="GO:0031119">
    <property type="term" value="P:tRNA pseudouridine synthesis"/>
    <property type="evidence" value="ECO:0007669"/>
    <property type="project" value="UniProtKB-UniRule"/>
</dbReference>
<dbReference type="CDD" id="cd02573">
    <property type="entry name" value="PseudoU_synth_EcTruB"/>
    <property type="match status" value="1"/>
</dbReference>
<dbReference type="FunFam" id="3.30.2350.10:FF:000011">
    <property type="entry name" value="tRNA pseudouridine synthase B"/>
    <property type="match status" value="1"/>
</dbReference>
<dbReference type="Gene3D" id="3.30.2350.10">
    <property type="entry name" value="Pseudouridine synthase"/>
    <property type="match status" value="1"/>
</dbReference>
<dbReference type="HAMAP" id="MF_01080">
    <property type="entry name" value="TruB_bact"/>
    <property type="match status" value="1"/>
</dbReference>
<dbReference type="InterPro" id="IPR020103">
    <property type="entry name" value="PsdUridine_synth_cat_dom_sf"/>
</dbReference>
<dbReference type="InterPro" id="IPR002501">
    <property type="entry name" value="PsdUridine_synth_N"/>
</dbReference>
<dbReference type="InterPro" id="IPR014780">
    <property type="entry name" value="tRNA_psdUridine_synth_TruB"/>
</dbReference>
<dbReference type="InterPro" id="IPR032819">
    <property type="entry name" value="TruB_C"/>
</dbReference>
<dbReference type="NCBIfam" id="TIGR00431">
    <property type="entry name" value="TruB"/>
    <property type="match status" value="1"/>
</dbReference>
<dbReference type="PANTHER" id="PTHR13767:SF2">
    <property type="entry name" value="PSEUDOURIDYLATE SYNTHASE TRUB1"/>
    <property type="match status" value="1"/>
</dbReference>
<dbReference type="PANTHER" id="PTHR13767">
    <property type="entry name" value="TRNA-PSEUDOURIDINE SYNTHASE"/>
    <property type="match status" value="1"/>
</dbReference>
<dbReference type="Pfam" id="PF16198">
    <property type="entry name" value="TruB_C_2"/>
    <property type="match status" value="1"/>
</dbReference>
<dbReference type="Pfam" id="PF01509">
    <property type="entry name" value="TruB_N"/>
    <property type="match status" value="1"/>
</dbReference>
<dbReference type="SUPFAM" id="SSF55120">
    <property type="entry name" value="Pseudouridine synthase"/>
    <property type="match status" value="1"/>
</dbReference>
<comment type="function">
    <text evidence="1">Responsible for synthesis of pseudouridine from uracil-55 in the psi GC loop of transfer RNAs.</text>
</comment>
<comment type="catalytic activity">
    <reaction evidence="1">
        <text>uridine(55) in tRNA = pseudouridine(55) in tRNA</text>
        <dbReference type="Rhea" id="RHEA:42532"/>
        <dbReference type="Rhea" id="RHEA-COMP:10101"/>
        <dbReference type="Rhea" id="RHEA-COMP:10102"/>
        <dbReference type="ChEBI" id="CHEBI:65314"/>
        <dbReference type="ChEBI" id="CHEBI:65315"/>
        <dbReference type="EC" id="5.4.99.25"/>
    </reaction>
</comment>
<comment type="similarity">
    <text evidence="1">Belongs to the pseudouridine synthase TruB family. Type 1 subfamily.</text>
</comment>
<sequence>MITGIINLKKEAGMTSHDAVFKLRKILHTKKIGHGGTLDPDVVGVLPIAVGKATRVIEYMTESGKIYEGEITLGYATSTEDSSGEVISRTPLTQSDLSEDVVDHAMKSFTGPITQVPPMYSAVKVNGKKLYEYARSGEEVERPKRQITISEFRRTSPLYFEKGICRFSFYVSCSKGTYVRTLAVDLGIKLGYASHMSFLKRTSSAGLSITQSLTLEEINEKYKQEDFSFLLPIEYGVLDLPKVNLTEEDKVEISYGRRILLENEADTLAAFYENRVIAILEKRGNEFKPHKVLL</sequence>
<protein>
    <recommendedName>
        <fullName evidence="1">tRNA pseudouridine synthase B</fullName>
        <ecNumber evidence="1">5.4.99.25</ecNumber>
    </recommendedName>
    <alternativeName>
        <fullName evidence="1">tRNA pseudouridine(55) synthase</fullName>
        <shortName evidence="1">Psi55 synthase</shortName>
    </alternativeName>
    <alternativeName>
        <fullName evidence="1">tRNA pseudouridylate synthase</fullName>
    </alternativeName>
    <alternativeName>
        <fullName evidence="1">tRNA-uridine isomerase</fullName>
    </alternativeName>
</protein>
<gene>
    <name evidence="1" type="primary">truB</name>
    <name type="ordered locus">SAK_1093</name>
</gene>
<proteinExistence type="inferred from homology"/>
<name>TRUB_STRA1</name>
<organism>
    <name type="scientific">Streptococcus agalactiae serotype Ia (strain ATCC 27591 / A909 / CDC SS700)</name>
    <dbReference type="NCBI Taxonomy" id="205921"/>
    <lineage>
        <taxon>Bacteria</taxon>
        <taxon>Bacillati</taxon>
        <taxon>Bacillota</taxon>
        <taxon>Bacilli</taxon>
        <taxon>Lactobacillales</taxon>
        <taxon>Streptococcaceae</taxon>
        <taxon>Streptococcus</taxon>
    </lineage>
</organism>
<feature type="chain" id="PRO_0000229387" description="tRNA pseudouridine synthase B">
    <location>
        <begin position="1"/>
        <end position="294"/>
    </location>
</feature>
<feature type="active site" description="Nucleophile" evidence="1">
    <location>
        <position position="39"/>
    </location>
</feature>
<evidence type="ECO:0000255" key="1">
    <source>
        <dbReference type="HAMAP-Rule" id="MF_01080"/>
    </source>
</evidence>
<accession>Q3K189</accession>
<reference key="1">
    <citation type="journal article" date="2005" name="Proc. Natl. Acad. Sci. U.S.A.">
        <title>Genome analysis of multiple pathogenic isolates of Streptococcus agalactiae: implications for the microbial 'pan-genome'.</title>
        <authorList>
            <person name="Tettelin H."/>
            <person name="Masignani V."/>
            <person name="Cieslewicz M.J."/>
            <person name="Donati C."/>
            <person name="Medini D."/>
            <person name="Ward N.L."/>
            <person name="Angiuoli S.V."/>
            <person name="Crabtree J."/>
            <person name="Jones A.L."/>
            <person name="Durkin A.S."/>
            <person name="DeBoy R.T."/>
            <person name="Davidsen T.M."/>
            <person name="Mora M."/>
            <person name="Scarselli M."/>
            <person name="Margarit y Ros I."/>
            <person name="Peterson J.D."/>
            <person name="Hauser C.R."/>
            <person name="Sundaram J.P."/>
            <person name="Nelson W.C."/>
            <person name="Madupu R."/>
            <person name="Brinkac L.M."/>
            <person name="Dodson R.J."/>
            <person name="Rosovitz M.J."/>
            <person name="Sullivan S.A."/>
            <person name="Daugherty S.C."/>
            <person name="Haft D.H."/>
            <person name="Selengut J."/>
            <person name="Gwinn M.L."/>
            <person name="Zhou L."/>
            <person name="Zafar N."/>
            <person name="Khouri H."/>
            <person name="Radune D."/>
            <person name="Dimitrov G."/>
            <person name="Watkins K."/>
            <person name="O'Connor K.J."/>
            <person name="Smith S."/>
            <person name="Utterback T.R."/>
            <person name="White O."/>
            <person name="Rubens C.E."/>
            <person name="Grandi G."/>
            <person name="Madoff L.C."/>
            <person name="Kasper D.L."/>
            <person name="Telford J.L."/>
            <person name="Wessels M.R."/>
            <person name="Rappuoli R."/>
            <person name="Fraser C.M."/>
        </authorList>
    </citation>
    <scope>NUCLEOTIDE SEQUENCE [LARGE SCALE GENOMIC DNA]</scope>
    <source>
        <strain>ATCC 27591 / A909 / CDC SS700</strain>
    </source>
</reference>
<keyword id="KW-0413">Isomerase</keyword>
<keyword id="KW-0819">tRNA processing</keyword>